<dbReference type="EMBL" id="AAGW02032994">
    <property type="status" value="NOT_ANNOTATED_CDS"/>
    <property type="molecule type" value="Genomic_DNA"/>
</dbReference>
<dbReference type="PDB" id="3JAG">
    <property type="method" value="EM"/>
    <property type="resolution" value="3.65 A"/>
    <property type="chains" value="EE=2-263"/>
</dbReference>
<dbReference type="PDB" id="3JAH">
    <property type="method" value="EM"/>
    <property type="resolution" value="3.45 A"/>
    <property type="chains" value="EE=2-263"/>
</dbReference>
<dbReference type="PDB" id="3JAI">
    <property type="method" value="EM"/>
    <property type="resolution" value="3.65 A"/>
    <property type="chains" value="EE=2-263"/>
</dbReference>
<dbReference type="PDB" id="4D5L">
    <property type="method" value="EM"/>
    <property type="resolution" value="9.00 A"/>
    <property type="chains" value="E=1-263"/>
</dbReference>
<dbReference type="PDB" id="4D61">
    <property type="method" value="EM"/>
    <property type="resolution" value="9.00 A"/>
    <property type="chains" value="E=1-263"/>
</dbReference>
<dbReference type="PDB" id="4KZX">
    <property type="method" value="X-ray"/>
    <property type="resolution" value="7.81 A"/>
    <property type="chains" value="E=1-263"/>
</dbReference>
<dbReference type="PDB" id="4KZY">
    <property type="method" value="X-ray"/>
    <property type="resolution" value="7.01 A"/>
    <property type="chains" value="E=1-263"/>
</dbReference>
<dbReference type="PDB" id="4KZZ">
    <property type="method" value="X-ray"/>
    <property type="resolution" value="7.03 A"/>
    <property type="chains" value="E=1-263"/>
</dbReference>
<dbReference type="PDB" id="5K0Y">
    <property type="method" value="EM"/>
    <property type="resolution" value="5.80 A"/>
    <property type="chains" value="I=1-263"/>
</dbReference>
<dbReference type="PDB" id="5LZU">
    <property type="method" value="EM"/>
    <property type="resolution" value="3.75 A"/>
    <property type="chains" value="EE=1-263"/>
</dbReference>
<dbReference type="PDB" id="6D90">
    <property type="method" value="EM"/>
    <property type="resolution" value="3.20 A"/>
    <property type="chains" value="FF=1-263"/>
</dbReference>
<dbReference type="PDB" id="6P4G">
    <property type="method" value="EM"/>
    <property type="resolution" value="3.10 A"/>
    <property type="chains" value="F=1-263"/>
</dbReference>
<dbReference type="PDB" id="6P4H">
    <property type="method" value="EM"/>
    <property type="resolution" value="3.20 A"/>
    <property type="chains" value="F=1-263"/>
</dbReference>
<dbReference type="PDB" id="6P5I">
    <property type="method" value="EM"/>
    <property type="resolution" value="3.10 A"/>
    <property type="chains" value="F=1-263"/>
</dbReference>
<dbReference type="PDB" id="6P5J">
    <property type="method" value="EM"/>
    <property type="resolution" value="3.10 A"/>
    <property type="chains" value="F=1-263"/>
</dbReference>
<dbReference type="PDB" id="6P5K">
    <property type="method" value="EM"/>
    <property type="resolution" value="3.10 A"/>
    <property type="chains" value="F=1-263"/>
</dbReference>
<dbReference type="PDB" id="6P5N">
    <property type="method" value="EM"/>
    <property type="resolution" value="3.20 A"/>
    <property type="chains" value="F=1-263"/>
</dbReference>
<dbReference type="PDB" id="6R5Q">
    <property type="method" value="EM"/>
    <property type="resolution" value="3.00 A"/>
    <property type="chains" value="x=2-263"/>
</dbReference>
<dbReference type="PDB" id="6R6G">
    <property type="method" value="EM"/>
    <property type="resolution" value="3.70 A"/>
    <property type="chains" value="x=2-263"/>
</dbReference>
<dbReference type="PDB" id="6R6P">
    <property type="method" value="EM"/>
    <property type="resolution" value="3.10 A"/>
    <property type="chains" value="x=2-263"/>
</dbReference>
<dbReference type="PDB" id="6R7Q">
    <property type="method" value="EM"/>
    <property type="resolution" value="3.90 A"/>
    <property type="chains" value="x=2-263"/>
</dbReference>
<dbReference type="PDB" id="6SGC">
    <property type="method" value="EM"/>
    <property type="resolution" value="2.80 A"/>
    <property type="chains" value="F1=1-263"/>
</dbReference>
<dbReference type="PDB" id="6W2S">
    <property type="method" value="EM"/>
    <property type="resolution" value="3.00 A"/>
    <property type="chains" value="F=1-263"/>
</dbReference>
<dbReference type="PDB" id="6W2T">
    <property type="method" value="EM"/>
    <property type="resolution" value="3.36 A"/>
    <property type="chains" value="F=1-263"/>
</dbReference>
<dbReference type="PDB" id="6YAL">
    <property type="method" value="EM"/>
    <property type="resolution" value="3.00 A"/>
    <property type="chains" value="G=1-263"/>
</dbReference>
<dbReference type="PDB" id="6YAM">
    <property type="method" value="EM"/>
    <property type="resolution" value="3.60 A"/>
    <property type="chains" value="G=1-263"/>
</dbReference>
<dbReference type="PDB" id="6YAN">
    <property type="method" value="EM"/>
    <property type="resolution" value="3.48 A"/>
    <property type="chains" value="G=1-263"/>
</dbReference>
<dbReference type="PDB" id="6ZVK">
    <property type="method" value="EM"/>
    <property type="resolution" value="3.49 A"/>
    <property type="chains" value="j3=2-263"/>
</dbReference>
<dbReference type="PDB" id="7A01">
    <property type="method" value="EM"/>
    <property type="resolution" value="3.60 A"/>
    <property type="chains" value="j3=2-263"/>
</dbReference>
<dbReference type="PDB" id="7JQB">
    <property type="method" value="EM"/>
    <property type="resolution" value="2.70 A"/>
    <property type="chains" value="M=1-263"/>
</dbReference>
<dbReference type="PDB" id="7JQC">
    <property type="method" value="EM"/>
    <property type="resolution" value="3.30 A"/>
    <property type="chains" value="M=1-263"/>
</dbReference>
<dbReference type="PDB" id="7MDZ">
    <property type="method" value="EM"/>
    <property type="resolution" value="3.20 A"/>
    <property type="chains" value="EE=1-263"/>
</dbReference>
<dbReference type="PDB" id="7OYD">
    <property type="method" value="EM"/>
    <property type="resolution" value="2.30 A"/>
    <property type="chains" value="EE=1-263"/>
</dbReference>
<dbReference type="PDB" id="7SYX">
    <property type="method" value="EM"/>
    <property type="resolution" value="3.70 A"/>
    <property type="chains" value="F=2-263"/>
</dbReference>
<dbReference type="PDB" id="8BHF">
    <property type="method" value="EM"/>
    <property type="resolution" value="3.10 A"/>
    <property type="chains" value="F3=2-263"/>
</dbReference>
<dbReference type="PDB" id="8BTK">
    <property type="method" value="EM"/>
    <property type="resolution" value="3.50 A"/>
    <property type="chains" value="Ad=1-263"/>
</dbReference>
<dbReference type="PDB" id="8P03">
    <property type="method" value="EM"/>
    <property type="resolution" value="3.04 A"/>
    <property type="chains" value="G=1-263"/>
</dbReference>
<dbReference type="PDB" id="8P09">
    <property type="method" value="EM"/>
    <property type="resolution" value="3.30 A"/>
    <property type="chains" value="G=1-263"/>
</dbReference>
<dbReference type="PDB" id="8P2K">
    <property type="method" value="EM"/>
    <property type="resolution" value="2.90 A"/>
    <property type="chains" value="Ad=1-263"/>
</dbReference>
<dbReference type="PDB" id="8SCB">
    <property type="method" value="EM"/>
    <property type="resolution" value="2.50 A"/>
    <property type="chains" value="EE=1-263"/>
</dbReference>
<dbReference type="PDB" id="8VFT">
    <property type="method" value="EM"/>
    <property type="resolution" value="3.30 A"/>
    <property type="chains" value="EE=1-263"/>
</dbReference>
<dbReference type="PDB" id="9F1B">
    <property type="method" value="EM"/>
    <property type="resolution" value="3.01 A"/>
    <property type="chains" value="Ad=1-263"/>
</dbReference>
<dbReference type="PDB" id="9F1C">
    <property type="method" value="EM"/>
    <property type="resolution" value="3.78 A"/>
    <property type="chains" value="Ad=1-263"/>
</dbReference>
<dbReference type="PDB" id="9F1D">
    <property type="method" value="EM"/>
    <property type="resolution" value="3.26 A"/>
    <property type="chains" value="Ad=1-263"/>
</dbReference>
<dbReference type="PDBsum" id="3JAG"/>
<dbReference type="PDBsum" id="3JAH"/>
<dbReference type="PDBsum" id="3JAI"/>
<dbReference type="PDBsum" id="4D5L"/>
<dbReference type="PDBsum" id="4D61"/>
<dbReference type="PDBsum" id="4KZX"/>
<dbReference type="PDBsum" id="4KZY"/>
<dbReference type="PDBsum" id="4KZZ"/>
<dbReference type="PDBsum" id="5K0Y"/>
<dbReference type="PDBsum" id="5LZU"/>
<dbReference type="PDBsum" id="6D90"/>
<dbReference type="PDBsum" id="6P4G"/>
<dbReference type="PDBsum" id="6P4H"/>
<dbReference type="PDBsum" id="6P5I"/>
<dbReference type="PDBsum" id="6P5J"/>
<dbReference type="PDBsum" id="6P5K"/>
<dbReference type="PDBsum" id="6P5N"/>
<dbReference type="PDBsum" id="6R5Q"/>
<dbReference type="PDBsum" id="6R6G"/>
<dbReference type="PDBsum" id="6R6P"/>
<dbReference type="PDBsum" id="6R7Q"/>
<dbReference type="PDBsum" id="6SGC"/>
<dbReference type="PDBsum" id="6W2S"/>
<dbReference type="PDBsum" id="6W2T"/>
<dbReference type="PDBsum" id="6YAL"/>
<dbReference type="PDBsum" id="6YAM"/>
<dbReference type="PDBsum" id="6YAN"/>
<dbReference type="PDBsum" id="6ZVK"/>
<dbReference type="PDBsum" id="7A01"/>
<dbReference type="PDBsum" id="7JQB"/>
<dbReference type="PDBsum" id="7JQC"/>
<dbReference type="PDBsum" id="7MDZ"/>
<dbReference type="PDBsum" id="7OYD"/>
<dbReference type="PDBsum" id="7SYX"/>
<dbReference type="PDBsum" id="8BHF"/>
<dbReference type="PDBsum" id="8BTK"/>
<dbReference type="PDBsum" id="8P03"/>
<dbReference type="PDBsum" id="8P09"/>
<dbReference type="PDBsum" id="8P2K"/>
<dbReference type="PDBsum" id="8SCB"/>
<dbReference type="PDBsum" id="8VFT"/>
<dbReference type="PDBsum" id="9F1B"/>
<dbReference type="PDBsum" id="9F1C"/>
<dbReference type="PDBsum" id="9F1D"/>
<dbReference type="EMDB" id="EMD-0099"/>
<dbReference type="EMDB" id="EMD-0100"/>
<dbReference type="EMDB" id="EMD-0192"/>
<dbReference type="EMDB" id="EMD-0194"/>
<dbReference type="EMDB" id="EMD-0195"/>
<dbReference type="EMDB" id="EMD-0197"/>
<dbReference type="EMDB" id="EMD-10181"/>
<dbReference type="EMDB" id="EMD-10760"/>
<dbReference type="EMDB" id="EMD-10761"/>
<dbReference type="EMDB" id="EMD-10762"/>
<dbReference type="EMDB" id="EMD-11459"/>
<dbReference type="EMDB" id="EMD-11590"/>
<dbReference type="EMDB" id="EMD-12631"/>
<dbReference type="EMDB" id="EMD-12633"/>
<dbReference type="EMDB" id="EMD-13114"/>
<dbReference type="EMDB" id="EMD-16052"/>
<dbReference type="EMDB" id="EMD-16232"/>
<dbReference type="EMDB" id="EMD-17329"/>
<dbReference type="EMDB" id="EMD-17330"/>
<dbReference type="EMDB" id="EMD-17367"/>
<dbReference type="EMDB" id="EMD-20248"/>
<dbReference type="EMDB" id="EMD-20249"/>
<dbReference type="EMDB" id="EMD-20255"/>
<dbReference type="EMDB" id="EMD-20256"/>
<dbReference type="EMDB" id="EMD-20257"/>
<dbReference type="EMDB" id="EMD-20258"/>
<dbReference type="EMDB" id="EMD-21529"/>
<dbReference type="EMDB" id="EMD-21530"/>
<dbReference type="EMDB" id="EMD-22432"/>
<dbReference type="EMDB" id="EMD-22433"/>
<dbReference type="EMDB" id="EMD-23785"/>
<dbReference type="EMDB" id="EMD-25527"/>
<dbReference type="EMDB" id="EMD-25528"/>
<dbReference type="EMDB" id="EMD-25529"/>
<dbReference type="EMDB" id="EMD-25530"/>
<dbReference type="EMDB" id="EMD-25531"/>
<dbReference type="EMDB" id="EMD-25532"/>
<dbReference type="EMDB" id="EMD-25533"/>
<dbReference type="EMDB" id="EMD-25534"/>
<dbReference type="EMDB" id="EMD-25535"/>
<dbReference type="EMDB" id="EMD-25536"/>
<dbReference type="EMDB" id="EMD-25537"/>
<dbReference type="EMDB" id="EMD-25538"/>
<dbReference type="EMDB" id="EMD-25539"/>
<dbReference type="EMDB" id="EMD-25540"/>
<dbReference type="EMDB" id="EMD-25541"/>
<dbReference type="EMDB" id="EMD-25542"/>
<dbReference type="EMDB" id="EMD-25543"/>
<dbReference type="EMDB" id="EMD-25544"/>
<dbReference type="EMDB" id="EMD-40344"/>
<dbReference type="EMDB" id="EMD-4131"/>
<dbReference type="EMDB" id="EMD-4132"/>
<dbReference type="EMDB" id="EMD-4133"/>
<dbReference type="EMDB" id="EMD-4134"/>
<dbReference type="EMDB" id="EMD-4135"/>
<dbReference type="EMDB" id="EMD-4136"/>
<dbReference type="EMDB" id="EMD-4137"/>
<dbReference type="EMDB" id="EMD-43189"/>
<dbReference type="EMDB" id="EMD-45307"/>
<dbReference type="EMDB" id="EMD-4729"/>
<dbReference type="EMDB" id="EMD-4735"/>
<dbReference type="EMDB" id="EMD-4737"/>
<dbReference type="EMDB" id="EMD-4745"/>
<dbReference type="EMDB" id="EMD-50124"/>
<dbReference type="EMDB" id="EMD-50125"/>
<dbReference type="EMDB" id="EMD-50126"/>
<dbReference type="EMDB" id="EMD-7834"/>
<dbReference type="EMDB" id="EMD-7836"/>
<dbReference type="EMDB" id="EMD-8190"/>
<dbReference type="EMDB" id="EMD-9237"/>
<dbReference type="EMDB" id="EMD-9239"/>
<dbReference type="SMR" id="G1TK17"/>
<dbReference type="IntAct" id="G1TK17">
    <property type="interactions" value="1"/>
</dbReference>
<dbReference type="STRING" id="9986.ENSOCUP00000017299"/>
<dbReference type="PaxDb" id="9986-ENSOCUP00000017299"/>
<dbReference type="Ensembl" id="ENSOCUT00000025287.1">
    <property type="protein sequence ID" value="ENSOCUP00000017299.1"/>
    <property type="gene ID" value="ENSOCUG00000025352.1"/>
</dbReference>
<dbReference type="KEGG" id="ocu:100338112"/>
<dbReference type="eggNOG" id="KOG0378">
    <property type="taxonomic scope" value="Eukaryota"/>
</dbReference>
<dbReference type="GeneTree" id="ENSGT00390000005569"/>
<dbReference type="HOGENOM" id="CLU_060400_1_0_1"/>
<dbReference type="InParanoid" id="G1TK17"/>
<dbReference type="OMA" id="KANDTHK"/>
<dbReference type="OrthoDB" id="1109245at2759"/>
<dbReference type="TreeFam" id="TF300612"/>
<dbReference type="Proteomes" id="UP000001811">
    <property type="component" value="Chromosome 1"/>
</dbReference>
<dbReference type="Bgee" id="ENSOCUG00000025352">
    <property type="expression patterns" value="Expressed in testis and 14 other cell types or tissues"/>
</dbReference>
<dbReference type="GO" id="GO:0022626">
    <property type="term" value="C:cytosolic ribosome"/>
    <property type="evidence" value="ECO:0000314"/>
    <property type="project" value="UniProtKB"/>
</dbReference>
<dbReference type="GO" id="GO:0022627">
    <property type="term" value="C:cytosolic small ribosomal subunit"/>
    <property type="evidence" value="ECO:0007669"/>
    <property type="project" value="TreeGrafter"/>
</dbReference>
<dbReference type="GO" id="GO:0005730">
    <property type="term" value="C:nucleolus"/>
    <property type="evidence" value="ECO:0007669"/>
    <property type="project" value="UniProtKB-SubCell"/>
</dbReference>
<dbReference type="GO" id="GO:0019843">
    <property type="term" value="F:rRNA binding"/>
    <property type="evidence" value="ECO:0007669"/>
    <property type="project" value="UniProtKB-KW"/>
</dbReference>
<dbReference type="GO" id="GO:0003735">
    <property type="term" value="F:structural constituent of ribosome"/>
    <property type="evidence" value="ECO:0000314"/>
    <property type="project" value="UniProtKB"/>
</dbReference>
<dbReference type="GO" id="GO:0006412">
    <property type="term" value="P:translation"/>
    <property type="evidence" value="ECO:0007669"/>
    <property type="project" value="InterPro"/>
</dbReference>
<dbReference type="CDD" id="cd06087">
    <property type="entry name" value="KOW_RPS4"/>
    <property type="match status" value="1"/>
</dbReference>
<dbReference type="CDD" id="cd00165">
    <property type="entry name" value="S4"/>
    <property type="match status" value="1"/>
</dbReference>
<dbReference type="FunFam" id="2.30.30.30:FF:000005">
    <property type="entry name" value="40S ribosomal protein S4"/>
    <property type="match status" value="1"/>
</dbReference>
<dbReference type="FunFam" id="2.40.50.740:FF:000001">
    <property type="entry name" value="40S ribosomal protein S4"/>
    <property type="match status" value="1"/>
</dbReference>
<dbReference type="FunFam" id="3.10.290.10:FF:000051">
    <property type="entry name" value="40S ribosomal protein S4, X isoform"/>
    <property type="match status" value="1"/>
</dbReference>
<dbReference type="Gene3D" id="2.30.30.30">
    <property type="match status" value="1"/>
</dbReference>
<dbReference type="Gene3D" id="2.40.50.740">
    <property type="match status" value="1"/>
</dbReference>
<dbReference type="Gene3D" id="3.10.290.10">
    <property type="entry name" value="RNA-binding S4 domain"/>
    <property type="match status" value="1"/>
</dbReference>
<dbReference type="HAMAP" id="MF_00485">
    <property type="entry name" value="Ribosomal_eS4"/>
    <property type="match status" value="1"/>
</dbReference>
<dbReference type="InterPro" id="IPR005824">
    <property type="entry name" value="KOW"/>
</dbReference>
<dbReference type="InterPro" id="IPR014722">
    <property type="entry name" value="Rib_uL2_dom2"/>
</dbReference>
<dbReference type="InterPro" id="IPR000876">
    <property type="entry name" value="Ribosomal_eS4"/>
</dbReference>
<dbReference type="InterPro" id="IPR032277">
    <property type="entry name" value="Ribosomal_eS4_C"/>
</dbReference>
<dbReference type="InterPro" id="IPR013845">
    <property type="entry name" value="Ribosomal_eS4_central_region"/>
</dbReference>
<dbReference type="InterPro" id="IPR038237">
    <property type="entry name" value="Ribosomal_eS4_central_sf"/>
</dbReference>
<dbReference type="InterPro" id="IPR041982">
    <property type="entry name" value="Ribosomal_eS4_KOW"/>
</dbReference>
<dbReference type="InterPro" id="IPR013843">
    <property type="entry name" value="Ribosomal_eS4_N"/>
</dbReference>
<dbReference type="InterPro" id="IPR018199">
    <property type="entry name" value="Ribosomal_eS4_N_CS"/>
</dbReference>
<dbReference type="InterPro" id="IPR002942">
    <property type="entry name" value="S4_RNA-bd"/>
</dbReference>
<dbReference type="InterPro" id="IPR036986">
    <property type="entry name" value="S4_RNA-bd_sf"/>
</dbReference>
<dbReference type="PANTHER" id="PTHR11581">
    <property type="entry name" value="30S/40S RIBOSOMAL PROTEIN S4"/>
    <property type="match status" value="1"/>
</dbReference>
<dbReference type="PANTHER" id="PTHR11581:SF0">
    <property type="entry name" value="SMALL RIBOSOMAL SUBUNIT PROTEIN ES4"/>
    <property type="match status" value="1"/>
</dbReference>
<dbReference type="Pfam" id="PF16121">
    <property type="entry name" value="40S_S4_C"/>
    <property type="match status" value="1"/>
</dbReference>
<dbReference type="Pfam" id="PF00467">
    <property type="entry name" value="KOW"/>
    <property type="match status" value="1"/>
</dbReference>
<dbReference type="Pfam" id="PF00900">
    <property type="entry name" value="Ribosomal_S4e"/>
    <property type="match status" value="1"/>
</dbReference>
<dbReference type="Pfam" id="PF08071">
    <property type="entry name" value="RS4NT"/>
    <property type="match status" value="1"/>
</dbReference>
<dbReference type="PIRSF" id="PIRSF002116">
    <property type="entry name" value="Ribosomal_S4"/>
    <property type="match status" value="1"/>
</dbReference>
<dbReference type="SMART" id="SM00363">
    <property type="entry name" value="S4"/>
    <property type="match status" value="1"/>
</dbReference>
<dbReference type="PROSITE" id="PS00528">
    <property type="entry name" value="RIBOSOMAL_S4E"/>
    <property type="match status" value="1"/>
</dbReference>
<dbReference type="PROSITE" id="PS50889">
    <property type="entry name" value="S4"/>
    <property type="match status" value="1"/>
</dbReference>
<proteinExistence type="evidence at protein level"/>
<evidence type="ECO:0000250" key="1">
    <source>
        <dbReference type="UniProtKB" id="P62701"/>
    </source>
</evidence>
<evidence type="ECO:0000250" key="2">
    <source>
        <dbReference type="UniProtKB" id="P62702"/>
    </source>
</evidence>
<evidence type="ECO:0000255" key="3"/>
<evidence type="ECO:0000269" key="4">
    <source>
    </source>
</evidence>
<evidence type="ECO:0000269" key="5">
    <source>
    </source>
</evidence>
<evidence type="ECO:0000269" key="6">
    <source>
    </source>
</evidence>
<evidence type="ECO:0000269" key="7">
    <source>
    </source>
</evidence>
<evidence type="ECO:0000269" key="8">
    <source>
    </source>
</evidence>
<evidence type="ECO:0000269" key="9">
    <source>
    </source>
</evidence>
<evidence type="ECO:0000269" key="10">
    <source>
    </source>
</evidence>
<evidence type="ECO:0000269" key="11">
    <source>
    </source>
</evidence>
<evidence type="ECO:0000269" key="12">
    <source>
    </source>
</evidence>
<evidence type="ECO:0000269" key="13">
    <source>
    </source>
</evidence>
<evidence type="ECO:0000269" key="14">
    <source>
    </source>
</evidence>
<evidence type="ECO:0000269" key="15">
    <source>
    </source>
</evidence>
<evidence type="ECO:0000305" key="16"/>
<evidence type="ECO:0007744" key="17">
    <source>
        <dbReference type="PDB" id="3JAG"/>
    </source>
</evidence>
<evidence type="ECO:0007744" key="18">
    <source>
        <dbReference type="PDB" id="3JAH"/>
    </source>
</evidence>
<evidence type="ECO:0007744" key="19">
    <source>
        <dbReference type="PDB" id="4D5L"/>
    </source>
</evidence>
<evidence type="ECO:0007744" key="20">
    <source>
        <dbReference type="PDB" id="4D61"/>
    </source>
</evidence>
<evidence type="ECO:0007744" key="21">
    <source>
        <dbReference type="PDB" id="4KZX"/>
    </source>
</evidence>
<evidence type="ECO:0007744" key="22">
    <source>
        <dbReference type="PDB" id="4KZY"/>
    </source>
</evidence>
<evidence type="ECO:0007744" key="23">
    <source>
        <dbReference type="PDB" id="5LZU"/>
    </source>
</evidence>
<evidence type="ECO:0007744" key="24">
    <source>
        <dbReference type="PDB" id="6D90"/>
    </source>
</evidence>
<evidence type="ECO:0007744" key="25">
    <source>
        <dbReference type="PDB" id="6P4G"/>
    </source>
</evidence>
<evidence type="ECO:0007744" key="26">
    <source>
        <dbReference type="PDB" id="6P4H"/>
    </source>
</evidence>
<evidence type="ECO:0007744" key="27">
    <source>
        <dbReference type="PDB" id="6R5Q"/>
    </source>
</evidence>
<evidence type="ECO:0007744" key="28">
    <source>
        <dbReference type="PDB" id="6R6G"/>
    </source>
</evidence>
<evidence type="ECO:0007744" key="29">
    <source>
        <dbReference type="PDB" id="6SGC"/>
    </source>
</evidence>
<evidence type="ECO:0007744" key="30">
    <source>
        <dbReference type="PDB" id="6W2S"/>
    </source>
</evidence>
<evidence type="ECO:0007744" key="31">
    <source>
        <dbReference type="PDB" id="6W2T"/>
    </source>
</evidence>
<evidence type="ECO:0007744" key="32">
    <source>
        <dbReference type="PDB" id="6ZVK"/>
    </source>
</evidence>
<evidence type="ECO:0007744" key="33">
    <source>
        <dbReference type="PDB" id="7A01"/>
    </source>
</evidence>
<evidence type="ECO:0007744" key="34">
    <source>
        <dbReference type="PDB" id="7OYD"/>
    </source>
</evidence>
<evidence type="ECO:0007744" key="35">
    <source>
        <dbReference type="PDB" id="7SYX"/>
    </source>
</evidence>
<evidence type="ECO:0007829" key="36">
    <source>
        <dbReference type="PDB" id="6P4G"/>
    </source>
</evidence>
<evidence type="ECO:0007829" key="37">
    <source>
        <dbReference type="PDB" id="6YAL"/>
    </source>
</evidence>
<evidence type="ECO:0007829" key="38">
    <source>
        <dbReference type="PDB" id="7JQB"/>
    </source>
</evidence>
<evidence type="ECO:0007829" key="39">
    <source>
        <dbReference type="PDB" id="8P09"/>
    </source>
</evidence>
<gene>
    <name type="primary">RPS4X</name>
</gene>
<name>RS4X_RABIT</name>
<reference key="1">
    <citation type="journal article" date="2011" name="Nature">
        <title>A high-resolution map of human evolutionary constraint using 29 mammals.</title>
        <authorList>
            <person name="Lindblad-Toh K."/>
            <person name="Garber M."/>
            <person name="Zuk O."/>
            <person name="Lin M.F."/>
            <person name="Parker B.J."/>
            <person name="Washietl S."/>
            <person name="Kheradpour P."/>
            <person name="Ernst J."/>
            <person name="Jordan G."/>
            <person name="Mauceli E."/>
            <person name="Ward L.D."/>
            <person name="Lowe C.B."/>
            <person name="Holloway A.K."/>
            <person name="Clamp M."/>
            <person name="Gnerre S."/>
            <person name="Alfoldi J."/>
            <person name="Beal K."/>
            <person name="Chang J."/>
            <person name="Clawson H."/>
            <person name="Cuff J."/>
            <person name="Di Palma F."/>
            <person name="Fitzgerald S."/>
            <person name="Flicek P."/>
            <person name="Guttman M."/>
            <person name="Hubisz M.J."/>
            <person name="Jaffe D.B."/>
            <person name="Jungreis I."/>
            <person name="Kent W.J."/>
            <person name="Kostka D."/>
            <person name="Lara M."/>
            <person name="Martins A.L."/>
            <person name="Massingham T."/>
            <person name="Moltke I."/>
            <person name="Raney B.J."/>
            <person name="Rasmussen M.D."/>
            <person name="Robinson J."/>
            <person name="Stark A."/>
            <person name="Vilella A.J."/>
            <person name="Wen J."/>
            <person name="Xie X."/>
            <person name="Zody M.C."/>
            <person name="Baldwin J."/>
            <person name="Bloom T."/>
            <person name="Chin C.W."/>
            <person name="Heiman D."/>
            <person name="Nicol R."/>
            <person name="Nusbaum C."/>
            <person name="Young S."/>
            <person name="Wilkinson J."/>
            <person name="Worley K.C."/>
            <person name="Kovar C.L."/>
            <person name="Muzny D.M."/>
            <person name="Gibbs R.A."/>
            <person name="Cree A."/>
            <person name="Dihn H.H."/>
            <person name="Fowler G."/>
            <person name="Jhangiani S."/>
            <person name="Joshi V."/>
            <person name="Lee S."/>
            <person name="Lewis L.R."/>
            <person name="Nazareth L.V."/>
            <person name="Okwuonu G."/>
            <person name="Santibanez J."/>
            <person name="Warren W.C."/>
            <person name="Mardis E.R."/>
            <person name="Weinstock G.M."/>
            <person name="Wilson R.K."/>
            <person name="Delehaunty K."/>
            <person name="Dooling D."/>
            <person name="Fronik C."/>
            <person name="Fulton L."/>
            <person name="Fulton B."/>
            <person name="Graves T."/>
            <person name="Minx P."/>
            <person name="Sodergren E."/>
            <person name="Birney E."/>
            <person name="Margulies E.H."/>
            <person name="Herrero J."/>
            <person name="Green E.D."/>
            <person name="Haussler D."/>
            <person name="Siepel A."/>
            <person name="Goldman N."/>
            <person name="Pollard K.S."/>
            <person name="Pedersen J.S."/>
            <person name="Lander E.S."/>
            <person name="Kellis M."/>
        </authorList>
    </citation>
    <scope>NUCLEOTIDE SEQUENCE [LARGE SCALE GENOMIC DNA]</scope>
    <source>
        <strain>Thorbecke</strain>
    </source>
</reference>
<reference evidence="21 22" key="2">
    <citation type="journal article" date="2013" name="Nature">
        <title>The initiation of mammalian protein synthesis and mRNA scanning mechanism.</title>
        <authorList>
            <person name="Lomakin I.B."/>
            <person name="Steitz T.A."/>
        </authorList>
    </citation>
    <scope>X-RAY CRYSTALLOGRAPHY (7.01 ANGSTROMS) OF 40S RIBOSOME</scope>
    <scope>FUNCTION</scope>
    <scope>SUBUNIT</scope>
    <scope>SUBCELLULAR LOCATION</scope>
</reference>
<reference evidence="19 20" key="3">
    <citation type="journal article" date="2015" name="Mol. Cell">
        <title>Cryo-EM of ribosomal 80S complexes with termination factors reveals the translocated cricket paralysis virus IRES.</title>
        <authorList>
            <person name="Muhs M."/>
            <person name="Hilal T."/>
            <person name="Mielke T."/>
            <person name="Skabkin M.A."/>
            <person name="Sanbonmatsu K.Y."/>
            <person name="Pestova T.V."/>
            <person name="Spahn C.M."/>
        </authorList>
    </citation>
    <scope>STRUCTURE BY ELECTRON MICROSCOPY (9.00 ANGSTROMS) OF RIBOSOME</scope>
    <scope>FUNCTION</scope>
    <scope>SUBUNIT</scope>
    <scope>SUBCELLULAR LOCATION</scope>
</reference>
<reference evidence="17 18" key="4">
    <citation type="journal article" date="2015" name="Nature">
        <title>Structural basis for stop codon recognition in eukaryotes.</title>
        <authorList>
            <person name="Brown A."/>
            <person name="Shao S."/>
            <person name="Murray J."/>
            <person name="Hegde R.S."/>
            <person name="Ramakrishnan V."/>
        </authorList>
    </citation>
    <scope>STRUCTURE BY ELECTRON MICROSCOPY (3.45 ANGSTROMS) OF 2-263 OF RIBOSOME</scope>
    <scope>FUNCTION</scope>
    <scope>SUBCELLULAR LOCATION</scope>
    <scope>SUBUNIT</scope>
</reference>
<reference evidence="23" key="5">
    <citation type="journal article" date="2016" name="Cell">
        <title>Decoding mammalian ribosome-mRNA states by translational GTPase complexes.</title>
        <authorList>
            <person name="Shao S."/>
            <person name="Murray J."/>
            <person name="Brown A."/>
            <person name="Taunton J."/>
            <person name="Ramakrishnan V."/>
            <person name="Hegde R.S."/>
        </authorList>
    </citation>
    <scope>STRUCTURE BY ELECTRON MICROSCOPY (3.31 ANGSTROMS) OF RIBOSOME</scope>
    <scope>FUNCTION</scope>
    <scope>SUBCELLULAR LOCATION</scope>
    <scope>SUBUNIT</scope>
</reference>
<reference evidence="24" key="6">
    <citation type="journal article" date="2018" name="Elife">
        <title>Dual tRNA mimicry in the Cricket paralysis virus IRES uncovers an unexpected similarity with the Hepatitis C Virus IRES.</title>
        <authorList>
            <person name="Pisareva V.P."/>
            <person name="Pisarev A.V."/>
            <person name="Fernandez I.S."/>
        </authorList>
    </citation>
    <scope>STRUCTURE BY ELECTRON MICROSCOPY (3.20 ANGSTROMS) OF RIBOSOME</scope>
    <scope>SUBCELLULAR LOCATION</scope>
    <scope>SUBUNIT</scope>
</reference>
<reference evidence="27 28" key="7">
    <citation type="journal article" date="2019" name="Elife">
        <title>Structural and mutational analysis of the ribosome-arresting human XBP1u.</title>
        <authorList>
            <person name="Shanmuganathan V."/>
            <person name="Schiller N."/>
            <person name="Magoulopoulou A."/>
            <person name="Cheng J."/>
            <person name="Braunger K."/>
            <person name="Cymer F."/>
            <person name="Berninghausen O."/>
            <person name="Beatrix B."/>
            <person name="Kohno K."/>
            <person name="von Heijne G."/>
            <person name="Beckmann R."/>
        </authorList>
    </citation>
    <scope>STRUCTURE BY ELECTRON MICROSCOPY (3.00 ANGSTROMS) OF 2-263 OF RIBOSOME</scope>
    <scope>SUBCELLULAR LOCATION</scope>
    <scope>SUBUNIT</scope>
</reference>
<reference evidence="25 26" key="8">
    <citation type="journal article" date="2019" name="EMBO J.">
        <title>The Israeli acute paralysis virus IRES captures host ribosomes by mimicking a ribosomal state with hybrid tRNAs.</title>
        <authorList>
            <person name="Acosta-Reyes F."/>
            <person name="Neupane R."/>
            <person name="Frank J."/>
            <person name="Fernandez I.S."/>
        </authorList>
    </citation>
    <scope>STRUCTURE BY ELECTRON MICROSCOPY (3.10 ANGSTROMS) OF RIBOSOME</scope>
    <scope>SUBUNIT</scope>
    <scope>SUBCELLULAR LOCATION</scope>
</reference>
<reference evidence="29" key="9">
    <citation type="journal article" date="2019" name="Nat. Struct. Mol. Biol.">
        <title>Mechanism of ribosome stalling during translation of a poly(A) tail.</title>
        <authorList>
            <person name="Chandrasekaran V."/>
            <person name="Juszkiewicz S."/>
            <person name="Choi J."/>
            <person name="Puglisi J.D."/>
            <person name="Brown A."/>
            <person name="Shao S."/>
            <person name="Ramakrishnan V."/>
            <person name="Hegde R.S."/>
        </authorList>
    </citation>
    <scope>STRUCTURE BY ELECTRON MICROSCOPY (2.80 ANGSTROMS) OF RIBOSOME</scope>
    <scope>SUBCELLULAR LOCATION</scope>
    <scope>SUBUNIT</scope>
</reference>
<reference evidence="32 33" key="10">
    <citation type="journal article" date="2020" name="Cell Rep.">
        <title>The Halastavi arva virus intergenic region IRES promotes translation by the simplest possible initiation mechanism.</title>
        <authorList>
            <person name="Abaeva I.S."/>
            <person name="Vicens Q."/>
            <person name="Bochler A."/>
            <person name="Soufari H."/>
            <person name="Simonetti A."/>
            <person name="Pestova T.V."/>
            <person name="Hashem Y."/>
            <person name="Hellen C.U.T."/>
        </authorList>
    </citation>
    <scope>STRUCTURE BY ELECTRON MICROSCOPY (3.49 ANGSTROMS) OF RIBOSOME</scope>
    <scope>SUBCELLULAR LOCATION</scope>
    <scope>SUBUNIT</scope>
</reference>
<reference evidence="30 31" key="11">
    <citation type="journal article" date="2020" name="Elife">
        <title>A complex IRES at the 5'-UTR of a viral mRNA assembles a functional 48S complex via an uAUG intermediate.</title>
        <authorList>
            <person name="Neupane R."/>
            <person name="Pisareva V.P."/>
            <person name="Rodriguez C.F."/>
            <person name="Pisarev A.V."/>
            <person name="Fernandez I.S."/>
        </authorList>
    </citation>
    <scope>STRUCTURE BY ELECTRON MICROSCOPY (3.00 ANGSTROMS) OF RIBOSOME</scope>
    <scope>SUBUNIT</scope>
    <scope>SUBCELLULAR LOCATION</scope>
</reference>
<reference evidence="35" key="12">
    <citation type="journal article" date="2022" name="EMBO J.">
        <title>Molecular architecture of 40S translation initiation complexes on the hepatitis C virus IRES.</title>
        <authorList>
            <person name="Brown Z.P."/>
            <person name="Abaeva I.S."/>
            <person name="De S."/>
            <person name="Hellen C.U.T."/>
            <person name="Pestova T.V."/>
            <person name="Frank J."/>
        </authorList>
    </citation>
    <scope>STRUCTURE BY ELECTRON MICROSCOPY (3.50 ANGSTROMS) OF RIBOSOME</scope>
    <scope>SUBCELLULAR LOCATION</scope>
    <scope>SUBUNIT</scope>
</reference>
<reference evidence="34" key="13">
    <citation type="journal article" date="2023" name="Nature">
        <title>A molecular network of conserved factors keeps ribosomes dormant in the egg.</title>
        <authorList>
            <person name="Leesch F."/>
            <person name="Lorenzo-Orts L."/>
            <person name="Pribitzer C."/>
            <person name="Grishkovskaya I."/>
            <person name="Roehsner J."/>
            <person name="Chugunova A."/>
            <person name="Matzinger M."/>
            <person name="Roitinger E."/>
            <person name="Belacic K."/>
            <person name="Kandolf S."/>
            <person name="Lin T.Y."/>
            <person name="Mechtler K."/>
            <person name="Meinhart A."/>
            <person name="Haselbach D."/>
            <person name="Pauli A."/>
        </authorList>
    </citation>
    <scope>STRUCTURE BY ELECTRON MICROSCOPY (2.30 ANGSTROMS) OF RIBOSOME</scope>
    <scope>SUBCELLULAR LOCATION</scope>
    <scope>SUBUNIT</scope>
</reference>
<organism>
    <name type="scientific">Oryctolagus cuniculus</name>
    <name type="common">Rabbit</name>
    <dbReference type="NCBI Taxonomy" id="9986"/>
    <lineage>
        <taxon>Eukaryota</taxon>
        <taxon>Metazoa</taxon>
        <taxon>Chordata</taxon>
        <taxon>Craniata</taxon>
        <taxon>Vertebrata</taxon>
        <taxon>Euteleostomi</taxon>
        <taxon>Mammalia</taxon>
        <taxon>Eutheria</taxon>
        <taxon>Euarchontoglires</taxon>
        <taxon>Glires</taxon>
        <taxon>Lagomorpha</taxon>
        <taxon>Leporidae</taxon>
        <taxon>Oryctolagus</taxon>
    </lineage>
</organism>
<accession>G1TK17</accession>
<comment type="function">
    <text evidence="4 5 6 7">Component of the small ribosomal subunit (PubMed:23873042, PubMed:25601755, PubMed:26245381, PubMed:27863242). The ribosome is a large ribonucleoprotein complex responsible for the synthesis of proteins in the cell (PubMed:23873042, PubMed:25601755, PubMed:26245381, PubMed:27863242). Part of the small subunit (SSU) processome, first precursor of the small eukaryotic ribosomal subunit (PubMed:23873042, PubMed:25601755, PubMed:26245381, PubMed:27863242). During the assembly of the SSU processome in the nucleolus, many ribosome biogenesis factors, an RNA chaperone and ribosomal proteins associate with the nascent pre-rRNA and work in concert to generate RNA folding, modifications, rearrangements and cleavage as well as targeted degradation of pre-ribosomal RNA by the RNA exosome (PubMed:23873042, PubMed:25601755, PubMed:26245381, PubMed:27863242).</text>
</comment>
<comment type="subunit">
    <text evidence="1 4 5 6 7 8 9 10 11 12 13 14 15">Component of the small ribosomal subunit (PubMed:23873042, PubMed:25601755, PubMed:26245381, PubMed:27863242, PubMed:29856316, PubMed:31246176, PubMed:31609474, PubMed:31768042, PubMed:32286223, PubMed:33296660, PubMed:35822879, PubMed:36653451). Part of the small subunit (SSU) processome, composed of more than 70 proteins and the RNA chaperone small nucleolar RNA (snoRNA) U3 (PubMed:23873042, PubMed:25601755, PubMed:26245381, PubMed:27863242, PubMed:29856316, PubMed:31246176, PubMed:31609474, PubMed:31768042, PubMed:32286223, PubMed:33296660, PubMed:35822879, PubMed:36653451). Identified in a IGF2BP1-dependent mRNP granule complex containing untranslated mRNAs (By similarity).</text>
</comment>
<comment type="subcellular location">
    <subcellularLocation>
        <location evidence="4 5 6 7 8 9 10 11 12 13 14 15">Cytoplasm</location>
    </subcellularLocation>
    <subcellularLocation>
        <location evidence="1">Nucleus</location>
        <location evidence="1">Nucleolus</location>
    </subcellularLocation>
    <text evidence="1">Localized in cytoplasmic mRNP granules containing untranslated mRNAs.</text>
</comment>
<comment type="similarity">
    <text evidence="16">Belongs to the eukaryotic ribosomal protein eS4 family.</text>
</comment>
<feature type="initiator methionine" description="Removed" evidence="1">
    <location>
        <position position="1"/>
    </location>
</feature>
<feature type="chain" id="PRO_0000460054" description="Small ribosomal subunit protein eS4">
    <location>
        <begin position="2"/>
        <end position="263"/>
    </location>
</feature>
<feature type="domain" description="S4 RNA-binding" evidence="3">
    <location>
        <begin position="42"/>
        <end position="104"/>
    </location>
</feature>
<feature type="modified residue" description="N6-acetyllysine" evidence="2">
    <location>
        <position position="233"/>
    </location>
</feature>
<feature type="cross-link" description="Glycyl lysine isopeptide (Lys-Gly) (interchain with G-Cter in SUMO2)" evidence="1">
    <location>
        <position position="230"/>
    </location>
</feature>
<feature type="helix" evidence="38">
    <location>
        <begin position="11"/>
        <end position="13"/>
    </location>
</feature>
<feature type="helix" evidence="38">
    <location>
        <begin position="16"/>
        <end position="18"/>
    </location>
</feature>
<feature type="strand" evidence="38">
    <location>
        <begin position="22"/>
        <end position="24"/>
    </location>
</feature>
<feature type="strand" evidence="37">
    <location>
        <begin position="26"/>
        <end position="28"/>
    </location>
</feature>
<feature type="strand" evidence="38">
    <location>
        <begin position="33"/>
        <end position="36"/>
    </location>
</feature>
<feature type="helix" evidence="38">
    <location>
        <begin position="38"/>
        <end position="40"/>
    </location>
</feature>
<feature type="helix" evidence="38">
    <location>
        <begin position="44"/>
        <end position="49"/>
    </location>
</feature>
<feature type="turn" evidence="36">
    <location>
        <begin position="50"/>
        <end position="52"/>
    </location>
</feature>
<feature type="helix" evidence="38">
    <location>
        <begin position="58"/>
        <end position="65"/>
    </location>
</feature>
<feature type="turn" evidence="38">
    <location>
        <begin position="66"/>
        <end position="68"/>
    </location>
</feature>
<feature type="strand" evidence="38">
    <location>
        <begin position="70"/>
        <end position="72"/>
    </location>
</feature>
<feature type="strand" evidence="37">
    <location>
        <begin position="83"/>
        <end position="87"/>
    </location>
</feature>
<feature type="strand" evidence="38">
    <location>
        <begin position="90"/>
        <end position="95"/>
    </location>
</feature>
<feature type="strand" evidence="37">
    <location>
        <begin position="97"/>
        <end position="100"/>
    </location>
</feature>
<feature type="strand" evidence="39">
    <location>
        <begin position="102"/>
        <end position="104"/>
    </location>
</feature>
<feature type="strand" evidence="38">
    <location>
        <begin position="107"/>
        <end position="110"/>
    </location>
</feature>
<feature type="turn" evidence="37">
    <location>
        <begin position="116"/>
        <end position="120"/>
    </location>
</feature>
<feature type="strand" evidence="38">
    <location>
        <begin position="122"/>
        <end position="131"/>
    </location>
</feature>
<feature type="helix" evidence="38">
    <location>
        <begin position="133"/>
        <end position="135"/>
    </location>
</feature>
<feature type="strand" evidence="38">
    <location>
        <begin position="137"/>
        <end position="141"/>
    </location>
</feature>
<feature type="strand" evidence="38">
    <location>
        <begin position="146"/>
        <end position="149"/>
    </location>
</feature>
<feature type="strand" evidence="38">
    <location>
        <begin position="159"/>
        <end position="162"/>
    </location>
</feature>
<feature type="strand" evidence="38">
    <location>
        <begin position="164"/>
        <end position="166"/>
    </location>
</feature>
<feature type="strand" evidence="38">
    <location>
        <begin position="169"/>
        <end position="173"/>
    </location>
</feature>
<feature type="strand" evidence="38">
    <location>
        <begin position="180"/>
        <end position="182"/>
    </location>
</feature>
<feature type="turn" evidence="38">
    <location>
        <begin position="187"/>
        <end position="190"/>
    </location>
</feature>
<feature type="strand" evidence="38">
    <location>
        <begin position="192"/>
        <end position="194"/>
    </location>
</feature>
<feature type="strand" evidence="37">
    <location>
        <begin position="202"/>
        <end position="204"/>
    </location>
</feature>
<feature type="strand" evidence="38">
    <location>
        <begin position="207"/>
        <end position="211"/>
    </location>
</feature>
<feature type="strand" evidence="36">
    <location>
        <begin position="213"/>
        <end position="215"/>
    </location>
</feature>
<feature type="strand" evidence="38">
    <location>
        <begin position="217"/>
        <end position="221"/>
    </location>
</feature>
<feature type="helix" evidence="38">
    <location>
        <begin position="222"/>
        <end position="224"/>
    </location>
</feature>
<feature type="strand" evidence="38">
    <location>
        <begin position="227"/>
        <end position="230"/>
    </location>
</feature>
<feature type="strand" evidence="38">
    <location>
        <begin position="233"/>
        <end position="236"/>
    </location>
</feature>
<feature type="turn" evidence="38">
    <location>
        <begin position="240"/>
        <end position="243"/>
    </location>
</feature>
<feature type="helix" evidence="38">
    <location>
        <begin position="248"/>
        <end position="258"/>
    </location>
</feature>
<feature type="strand" evidence="38">
    <location>
        <begin position="259"/>
        <end position="261"/>
    </location>
</feature>
<keyword id="KW-0002">3D-structure</keyword>
<keyword id="KW-0007">Acetylation</keyword>
<keyword id="KW-0963">Cytoplasm</keyword>
<keyword id="KW-1017">Isopeptide bond</keyword>
<keyword id="KW-0539">Nucleus</keyword>
<keyword id="KW-1185">Reference proteome</keyword>
<keyword id="KW-0687">Ribonucleoprotein</keyword>
<keyword id="KW-0689">Ribosomal protein</keyword>
<keyword id="KW-0694">RNA-binding</keyword>
<keyword id="KW-0699">rRNA-binding</keyword>
<keyword id="KW-0832">Ubl conjugation</keyword>
<protein>
    <recommendedName>
        <fullName>Small ribosomal subunit protein eS4</fullName>
    </recommendedName>
    <alternativeName>
        <fullName>40S ribosomal protein S4</fullName>
    </alternativeName>
</protein>
<sequence>MARGPKKHLKRVAAPKHWMLDKLTSVFAPRPSTGPHKLRECLPLIIFLRNKLKYALTGDEVKKICMQRFIKIDGKVRADITYPAGFMDVISIDKTGENFRLIYDTKGRFAVHRITPEEAKYKLCKVRKIFVGTKGIPHLVTHDARTIRYPDPLIKMNDTIQIDLETGKITDFIKFDTGNLCMVTGGANLGRIGVITNRERHPGSFDVVHVKDANGNSFATRLSNIFVIGKGNKPWISLPRGKGIRLTIAEERDKRLAAKQSSG</sequence>